<evidence type="ECO:0000255" key="1">
    <source>
        <dbReference type="HAMAP-Rule" id="MF_00297"/>
    </source>
</evidence>
<evidence type="ECO:0000305" key="2"/>
<sequence>MNRFPTERPADFVDDLKVPAAPDALFFIVREGKLLLSDAGELPSGHSLAGQAVIALGRLGERPVFALPLTGEAPAGAQLVGLRQCFGVLPDGLFGLAGLAVQLVDFQRSHQFCGACGTPMRPGEGDRARRCPSCGLRVYPRVAPAIIVLISRGTGPDTEFLLLRGPRQAPDVFTTLAGFVEPSETLEAAVHREVGEEVGVKVRQVQYRFSQPWPFPHSLMLAFTAEYAGGDIVPQPGEVEEAQWFTVSDLPQLPPTFTASRRLLDDALATLRLSGDFATT</sequence>
<reference key="1">
    <citation type="journal article" date="1999" name="Science">
        <title>Genome sequence of the radioresistant bacterium Deinococcus radiodurans R1.</title>
        <authorList>
            <person name="White O."/>
            <person name="Eisen J.A."/>
            <person name="Heidelberg J.F."/>
            <person name="Hickey E.K."/>
            <person name="Peterson J.D."/>
            <person name="Dodson R.J."/>
            <person name="Haft D.H."/>
            <person name="Gwinn M.L."/>
            <person name="Nelson W.C."/>
            <person name="Richardson D.L."/>
            <person name="Moffat K.S."/>
            <person name="Qin H."/>
            <person name="Jiang L."/>
            <person name="Pamphile W."/>
            <person name="Crosby M."/>
            <person name="Shen M."/>
            <person name="Vamathevan J.J."/>
            <person name="Lam P."/>
            <person name="McDonald L.A."/>
            <person name="Utterback T.R."/>
            <person name="Zalewski C."/>
            <person name="Makarova K.S."/>
            <person name="Aravind L."/>
            <person name="Daly M.J."/>
            <person name="Minton K.W."/>
            <person name="Fleischmann R.D."/>
            <person name="Ketchum K.A."/>
            <person name="Nelson K.E."/>
            <person name="Salzberg S.L."/>
            <person name="Smith H.O."/>
            <person name="Venter J.C."/>
            <person name="Fraser C.M."/>
        </authorList>
    </citation>
    <scope>NUCLEOTIDE SEQUENCE [LARGE SCALE GENOMIC DNA]</scope>
    <source>
        <strain>ATCC 13939 / DSM 20539 / JCM 16871 / CCUG 27074 / LMG 4051 / NBRC 15346 / NCIMB 9279 / VKM B-1422 / R1</strain>
    </source>
</reference>
<organism>
    <name type="scientific">Deinococcus radiodurans (strain ATCC 13939 / DSM 20539 / JCM 16871 / CCUG 27074 / LMG 4051 / NBRC 15346 / NCIMB 9279 / VKM B-1422 / R1)</name>
    <dbReference type="NCBI Taxonomy" id="243230"/>
    <lineage>
        <taxon>Bacteria</taxon>
        <taxon>Thermotogati</taxon>
        <taxon>Deinococcota</taxon>
        <taxon>Deinococci</taxon>
        <taxon>Deinococcales</taxon>
        <taxon>Deinococcaceae</taxon>
        <taxon>Deinococcus</taxon>
    </lineage>
</organism>
<protein>
    <recommendedName>
        <fullName evidence="1">NAD-capped RNA hydrolase NudC</fullName>
        <shortName evidence="1">DeNADding enzyme NudC</shortName>
        <ecNumber evidence="1">3.6.1.-</ecNumber>
    </recommendedName>
    <alternativeName>
        <fullName evidence="1">NADH pyrophosphatase</fullName>
        <ecNumber evidence="1">3.6.1.22</ecNumber>
    </alternativeName>
</protein>
<name>NUDC_DEIRA</name>
<gene>
    <name evidence="1" type="primary">nudC</name>
    <name type="ordered locus">DR_1168</name>
</gene>
<feature type="chain" id="PRO_0000056962" description="NAD-capped RNA hydrolase NudC">
    <location>
        <begin position="1"/>
        <end position="280"/>
    </location>
</feature>
<feature type="domain" description="Nudix hydrolase" evidence="1">
    <location>
        <begin position="140"/>
        <end position="268"/>
    </location>
</feature>
<feature type="short sequence motif" description="Nudix box" evidence="1">
    <location>
        <begin position="178"/>
        <end position="199"/>
    </location>
</feature>
<feature type="binding site" evidence="1">
    <location>
        <position position="83"/>
    </location>
    <ligand>
        <name>substrate</name>
    </ligand>
</feature>
<feature type="binding site" evidence="1">
    <location>
        <position position="113"/>
    </location>
    <ligand>
        <name>Zn(2+)</name>
        <dbReference type="ChEBI" id="CHEBI:29105"/>
    </ligand>
</feature>
<feature type="binding site" evidence="1">
    <location>
        <position position="116"/>
    </location>
    <ligand>
        <name>Zn(2+)</name>
        <dbReference type="ChEBI" id="CHEBI:29105"/>
    </ligand>
</feature>
<feature type="binding site" evidence="1">
    <location>
        <position position="131"/>
    </location>
    <ligand>
        <name>Zn(2+)</name>
        <dbReference type="ChEBI" id="CHEBI:29105"/>
    </ligand>
</feature>
<feature type="binding site" evidence="1">
    <location>
        <position position="134"/>
    </location>
    <ligand>
        <name>Zn(2+)</name>
        <dbReference type="ChEBI" id="CHEBI:29105"/>
    </ligand>
</feature>
<feature type="binding site" evidence="1">
    <location>
        <position position="139"/>
    </location>
    <ligand>
        <name>substrate</name>
    </ligand>
</feature>
<feature type="binding site" evidence="1">
    <location>
        <position position="177"/>
    </location>
    <ligand>
        <name>a divalent metal cation</name>
        <dbReference type="ChEBI" id="CHEBI:60240"/>
        <label>1</label>
    </ligand>
</feature>
<feature type="binding site" evidence="1">
    <location>
        <position position="193"/>
    </location>
    <ligand>
        <name>a divalent metal cation</name>
        <dbReference type="ChEBI" id="CHEBI:60240"/>
        <label>2</label>
    </ligand>
</feature>
<feature type="binding site" evidence="1">
    <location>
        <position position="193"/>
    </location>
    <ligand>
        <name>a divalent metal cation</name>
        <dbReference type="ChEBI" id="CHEBI:60240"/>
        <label>3</label>
    </ligand>
</feature>
<feature type="binding site" evidence="1">
    <location>
        <position position="197"/>
    </location>
    <ligand>
        <name>a divalent metal cation</name>
        <dbReference type="ChEBI" id="CHEBI:60240"/>
        <label>1</label>
    </ligand>
</feature>
<feature type="binding site" evidence="1">
    <location>
        <position position="197"/>
    </location>
    <ligand>
        <name>a divalent metal cation</name>
        <dbReference type="ChEBI" id="CHEBI:60240"/>
        <label>3</label>
    </ligand>
</feature>
<feature type="binding site" evidence="1">
    <location>
        <begin position="211"/>
        <end position="218"/>
    </location>
    <ligand>
        <name>substrate</name>
    </ligand>
</feature>
<feature type="binding site" evidence="1">
    <location>
        <position position="238"/>
    </location>
    <ligand>
        <name>a divalent metal cation</name>
        <dbReference type="ChEBI" id="CHEBI:60240"/>
        <label>1</label>
    </ligand>
</feature>
<feature type="binding site" evidence="1">
    <location>
        <position position="238"/>
    </location>
    <ligand>
        <name>a divalent metal cation</name>
        <dbReference type="ChEBI" id="CHEBI:60240"/>
        <label>3</label>
    </ligand>
</feature>
<keyword id="KW-0378">Hydrolase</keyword>
<keyword id="KW-0460">Magnesium</keyword>
<keyword id="KW-0464">Manganese</keyword>
<keyword id="KW-0479">Metal-binding</keyword>
<keyword id="KW-0520">NAD</keyword>
<keyword id="KW-1185">Reference proteome</keyword>
<keyword id="KW-0862">Zinc</keyword>
<dbReference type="EC" id="3.6.1.-" evidence="1"/>
<dbReference type="EC" id="3.6.1.22" evidence="1"/>
<dbReference type="EMBL" id="AE000513">
    <property type="protein sequence ID" value="AAF10740.1"/>
    <property type="molecule type" value="Genomic_DNA"/>
</dbReference>
<dbReference type="PIR" id="F75428">
    <property type="entry name" value="F75428"/>
</dbReference>
<dbReference type="RefSeq" id="NP_294892.1">
    <property type="nucleotide sequence ID" value="NC_001263.1"/>
</dbReference>
<dbReference type="RefSeq" id="WP_010887811.1">
    <property type="nucleotide sequence ID" value="NC_001263.1"/>
</dbReference>
<dbReference type="SMR" id="Q9RV62"/>
<dbReference type="STRING" id="243230.DR_1168"/>
<dbReference type="PaxDb" id="243230-DR_1168"/>
<dbReference type="EnsemblBacteria" id="AAF10740">
    <property type="protein sequence ID" value="AAF10740"/>
    <property type="gene ID" value="DR_1168"/>
</dbReference>
<dbReference type="GeneID" id="69517415"/>
<dbReference type="KEGG" id="dra:DR_1168"/>
<dbReference type="PATRIC" id="fig|243230.17.peg.1366"/>
<dbReference type="eggNOG" id="COG2816">
    <property type="taxonomic scope" value="Bacteria"/>
</dbReference>
<dbReference type="HOGENOM" id="CLU_037162_0_1_0"/>
<dbReference type="InParanoid" id="Q9RV62"/>
<dbReference type="OrthoDB" id="9787476at2"/>
<dbReference type="Proteomes" id="UP000002524">
    <property type="component" value="Chromosome 1"/>
</dbReference>
<dbReference type="GO" id="GO:0000287">
    <property type="term" value="F:magnesium ion binding"/>
    <property type="evidence" value="ECO:0007669"/>
    <property type="project" value="UniProtKB-UniRule"/>
</dbReference>
<dbReference type="GO" id="GO:0030145">
    <property type="term" value="F:manganese ion binding"/>
    <property type="evidence" value="ECO:0007669"/>
    <property type="project" value="UniProtKB-UniRule"/>
</dbReference>
<dbReference type="GO" id="GO:0000210">
    <property type="term" value="F:NAD+ diphosphatase activity"/>
    <property type="evidence" value="ECO:0007669"/>
    <property type="project" value="UniProtKB-UniRule"/>
</dbReference>
<dbReference type="GO" id="GO:0035529">
    <property type="term" value="F:NADH pyrophosphatase activity"/>
    <property type="evidence" value="ECO:0000318"/>
    <property type="project" value="GO_Central"/>
</dbReference>
<dbReference type="GO" id="GO:0110153">
    <property type="term" value="F:RNA NAD-cap (NMN-forming) hydrolase activity"/>
    <property type="evidence" value="ECO:0007669"/>
    <property type="project" value="RHEA"/>
</dbReference>
<dbReference type="GO" id="GO:0008270">
    <property type="term" value="F:zinc ion binding"/>
    <property type="evidence" value="ECO:0007669"/>
    <property type="project" value="UniProtKB-UniRule"/>
</dbReference>
<dbReference type="GO" id="GO:0019677">
    <property type="term" value="P:NAD catabolic process"/>
    <property type="evidence" value="ECO:0000318"/>
    <property type="project" value="GO_Central"/>
</dbReference>
<dbReference type="GO" id="GO:0006734">
    <property type="term" value="P:NADH metabolic process"/>
    <property type="evidence" value="ECO:0000318"/>
    <property type="project" value="GO_Central"/>
</dbReference>
<dbReference type="GO" id="GO:0006742">
    <property type="term" value="P:NADP catabolic process"/>
    <property type="evidence" value="ECO:0000318"/>
    <property type="project" value="GO_Central"/>
</dbReference>
<dbReference type="CDD" id="cd03429">
    <property type="entry name" value="NUDIX_NADH_pyrophosphatase_Nudt13"/>
    <property type="match status" value="1"/>
</dbReference>
<dbReference type="Gene3D" id="3.90.79.20">
    <property type="match status" value="1"/>
</dbReference>
<dbReference type="Gene3D" id="3.90.79.10">
    <property type="entry name" value="Nucleoside Triphosphate Pyrophosphohydrolase"/>
    <property type="match status" value="1"/>
</dbReference>
<dbReference type="HAMAP" id="MF_00297">
    <property type="entry name" value="Nudix_NudC"/>
    <property type="match status" value="1"/>
</dbReference>
<dbReference type="InterPro" id="IPR050241">
    <property type="entry name" value="NAD-cap_RNA_hydrolase_NudC"/>
</dbReference>
<dbReference type="InterPro" id="IPR015375">
    <property type="entry name" value="NADH_PPase-like_N"/>
</dbReference>
<dbReference type="InterPro" id="IPR049734">
    <property type="entry name" value="NudC-like_C"/>
</dbReference>
<dbReference type="InterPro" id="IPR015797">
    <property type="entry name" value="NUDIX_hydrolase-like_dom_sf"/>
</dbReference>
<dbReference type="InterPro" id="IPR020084">
    <property type="entry name" value="NUDIX_hydrolase_CS"/>
</dbReference>
<dbReference type="InterPro" id="IPR000086">
    <property type="entry name" value="NUDIX_hydrolase_dom"/>
</dbReference>
<dbReference type="InterPro" id="IPR022925">
    <property type="entry name" value="RNA_Hydrolase_NudC"/>
</dbReference>
<dbReference type="InterPro" id="IPR015376">
    <property type="entry name" value="Znr_NADH_PPase"/>
</dbReference>
<dbReference type="NCBIfam" id="NF001299">
    <property type="entry name" value="PRK00241.1"/>
    <property type="match status" value="1"/>
</dbReference>
<dbReference type="PANTHER" id="PTHR42904:SF6">
    <property type="entry name" value="NAD-CAPPED RNA HYDROLASE NUDT12"/>
    <property type="match status" value="1"/>
</dbReference>
<dbReference type="PANTHER" id="PTHR42904">
    <property type="entry name" value="NUDIX HYDROLASE, NUDC SUBFAMILY"/>
    <property type="match status" value="1"/>
</dbReference>
<dbReference type="Pfam" id="PF00293">
    <property type="entry name" value="NUDIX"/>
    <property type="match status" value="1"/>
</dbReference>
<dbReference type="Pfam" id="PF09296">
    <property type="entry name" value="NUDIX-like"/>
    <property type="match status" value="1"/>
</dbReference>
<dbReference type="Pfam" id="PF09297">
    <property type="entry name" value="Zn_ribbon_NUD"/>
    <property type="match status" value="1"/>
</dbReference>
<dbReference type="SUPFAM" id="SSF55811">
    <property type="entry name" value="Nudix"/>
    <property type="match status" value="2"/>
</dbReference>
<dbReference type="PROSITE" id="PS51462">
    <property type="entry name" value="NUDIX"/>
    <property type="match status" value="1"/>
</dbReference>
<dbReference type="PROSITE" id="PS00893">
    <property type="entry name" value="NUDIX_BOX"/>
    <property type="match status" value="1"/>
</dbReference>
<comment type="function">
    <text evidence="1">mRNA decapping enzyme that specifically removes the nicotinamide adenine dinucleotide (NAD) cap from a subset of mRNAs by hydrolyzing the diphosphate linkage to produce nicotinamide mononucleotide (NMN) and 5' monophosphate mRNA. The NAD-cap is present at the 5'-end of some mRNAs and stabilizes RNA against 5'-processing. Has preference for mRNAs with a 5'-end purine. Catalyzes the hydrolysis of a broad range of dinucleotide pyrophosphates.</text>
</comment>
<comment type="catalytic activity">
    <reaction evidence="1">
        <text>a 5'-end NAD(+)-phospho-ribonucleoside in mRNA + H2O = a 5'-end phospho-adenosine-phospho-ribonucleoside in mRNA + beta-nicotinamide D-ribonucleotide + 2 H(+)</text>
        <dbReference type="Rhea" id="RHEA:60876"/>
        <dbReference type="Rhea" id="RHEA-COMP:15698"/>
        <dbReference type="Rhea" id="RHEA-COMP:15719"/>
        <dbReference type="ChEBI" id="CHEBI:14649"/>
        <dbReference type="ChEBI" id="CHEBI:15377"/>
        <dbReference type="ChEBI" id="CHEBI:15378"/>
        <dbReference type="ChEBI" id="CHEBI:144029"/>
        <dbReference type="ChEBI" id="CHEBI:144051"/>
    </reaction>
    <physiologicalReaction direction="left-to-right" evidence="1">
        <dbReference type="Rhea" id="RHEA:60877"/>
    </physiologicalReaction>
</comment>
<comment type="catalytic activity">
    <reaction evidence="1">
        <text>NAD(+) + H2O = beta-nicotinamide D-ribonucleotide + AMP + 2 H(+)</text>
        <dbReference type="Rhea" id="RHEA:11800"/>
        <dbReference type="ChEBI" id="CHEBI:14649"/>
        <dbReference type="ChEBI" id="CHEBI:15377"/>
        <dbReference type="ChEBI" id="CHEBI:15378"/>
        <dbReference type="ChEBI" id="CHEBI:57540"/>
        <dbReference type="ChEBI" id="CHEBI:456215"/>
        <dbReference type="EC" id="3.6.1.22"/>
    </reaction>
</comment>
<comment type="catalytic activity">
    <reaction evidence="1">
        <text>NADH + H2O = reduced beta-nicotinamide D-ribonucleotide + AMP + 2 H(+)</text>
        <dbReference type="Rhea" id="RHEA:48868"/>
        <dbReference type="ChEBI" id="CHEBI:15377"/>
        <dbReference type="ChEBI" id="CHEBI:15378"/>
        <dbReference type="ChEBI" id="CHEBI:57945"/>
        <dbReference type="ChEBI" id="CHEBI:90832"/>
        <dbReference type="ChEBI" id="CHEBI:456215"/>
        <dbReference type="EC" id="3.6.1.22"/>
    </reaction>
</comment>
<comment type="cofactor">
    <cofactor evidence="1">
        <name>Mg(2+)</name>
        <dbReference type="ChEBI" id="CHEBI:18420"/>
    </cofactor>
    <cofactor evidence="1">
        <name>Mn(2+)</name>
        <dbReference type="ChEBI" id="CHEBI:29035"/>
    </cofactor>
    <text evidence="1">Divalent metal cations. Mg(2+) or Mn(2+).</text>
</comment>
<comment type="cofactor">
    <cofactor evidence="1">
        <name>Zn(2+)</name>
        <dbReference type="ChEBI" id="CHEBI:29105"/>
    </cofactor>
    <text evidence="1">Binds 1 zinc ion per subunit.</text>
</comment>
<comment type="subunit">
    <text evidence="1">Homodimer.</text>
</comment>
<comment type="similarity">
    <text evidence="1 2">Belongs to the Nudix hydrolase family. NudC subfamily.</text>
</comment>
<accession>Q9RV62</accession>
<proteinExistence type="inferred from homology"/>